<sequence>MPKGCLVITVSGLAGSGTTTLCRNLAKHYGFKHVYAGLIFRQMAKERGMSLEEFQKYAELHPEIDREVDRRQVEAAKECNVVIEGRLAGWMVKNADLKIWLDAPIRVRAERVAKREGISVEEAFMKIAEREMQNRKRYLNLYGIDINDLSIYDLIIDTSKWSPEGVFAIVKAAIDHLYEKV</sequence>
<organism>
    <name type="scientific">Pyrococcus abyssi (strain GE5 / Orsay)</name>
    <dbReference type="NCBI Taxonomy" id="272844"/>
    <lineage>
        <taxon>Archaea</taxon>
        <taxon>Methanobacteriati</taxon>
        <taxon>Methanobacteriota</taxon>
        <taxon>Thermococci</taxon>
        <taxon>Thermococcales</taxon>
        <taxon>Thermococcaceae</taxon>
        <taxon>Pyrococcus</taxon>
    </lineage>
</organism>
<keyword id="KW-0067">ATP-binding</keyword>
<keyword id="KW-0963">Cytoplasm</keyword>
<keyword id="KW-0418">Kinase</keyword>
<keyword id="KW-0547">Nucleotide-binding</keyword>
<keyword id="KW-0808">Transferase</keyword>
<dbReference type="EC" id="2.7.4.25"/>
<dbReference type="EMBL" id="AJ248286">
    <property type="protein sequence ID" value="CAB50061.1"/>
    <property type="molecule type" value="Genomic_DNA"/>
</dbReference>
<dbReference type="EMBL" id="HE613800">
    <property type="protein sequence ID" value="CCE70567.1"/>
    <property type="molecule type" value="Genomic_DNA"/>
</dbReference>
<dbReference type="PIR" id="H75094">
    <property type="entry name" value="H75094"/>
</dbReference>
<dbReference type="RefSeq" id="WP_010868267.1">
    <property type="nucleotide sequence ID" value="NC_000868.1"/>
</dbReference>
<dbReference type="SMR" id="Q9UZJ6"/>
<dbReference type="STRING" id="272844.PAB0763"/>
<dbReference type="KEGG" id="pab:PAB0763"/>
<dbReference type="PATRIC" id="fig|272844.11.peg.1208"/>
<dbReference type="eggNOG" id="arCOG01037">
    <property type="taxonomic scope" value="Archaea"/>
</dbReference>
<dbReference type="HOGENOM" id="CLU_079959_1_0_2"/>
<dbReference type="OrthoDB" id="31096at2157"/>
<dbReference type="PhylomeDB" id="Q9UZJ6"/>
<dbReference type="Proteomes" id="UP000000810">
    <property type="component" value="Chromosome"/>
</dbReference>
<dbReference type="Proteomes" id="UP000009139">
    <property type="component" value="Chromosome"/>
</dbReference>
<dbReference type="GO" id="GO:0005737">
    <property type="term" value="C:cytoplasm"/>
    <property type="evidence" value="ECO:0007669"/>
    <property type="project" value="UniProtKB-SubCell"/>
</dbReference>
<dbReference type="GO" id="GO:0005524">
    <property type="term" value="F:ATP binding"/>
    <property type="evidence" value="ECO:0007669"/>
    <property type="project" value="UniProtKB-UniRule"/>
</dbReference>
<dbReference type="GO" id="GO:0036430">
    <property type="term" value="F:CMP kinase activity"/>
    <property type="evidence" value="ECO:0007669"/>
    <property type="project" value="RHEA"/>
</dbReference>
<dbReference type="GO" id="GO:0036431">
    <property type="term" value="F:dCMP kinase activity"/>
    <property type="evidence" value="ECO:0007669"/>
    <property type="project" value="RHEA"/>
</dbReference>
<dbReference type="GO" id="GO:0006220">
    <property type="term" value="P:pyrimidine nucleotide metabolic process"/>
    <property type="evidence" value="ECO:0007669"/>
    <property type="project" value="UniProtKB-UniRule"/>
</dbReference>
<dbReference type="CDD" id="cd02020">
    <property type="entry name" value="CMPK"/>
    <property type="match status" value="1"/>
</dbReference>
<dbReference type="Gene3D" id="3.40.50.300">
    <property type="entry name" value="P-loop containing nucleotide triphosphate hydrolases"/>
    <property type="match status" value="1"/>
</dbReference>
<dbReference type="HAMAP" id="MF_00239">
    <property type="entry name" value="Cytidyl_kinase_type2"/>
    <property type="match status" value="1"/>
</dbReference>
<dbReference type="InterPro" id="IPR011892">
    <property type="entry name" value="Cyt_kin_arch"/>
</dbReference>
<dbReference type="InterPro" id="IPR011994">
    <property type="entry name" value="Cytidylate_kinase_dom"/>
</dbReference>
<dbReference type="InterPro" id="IPR027417">
    <property type="entry name" value="P-loop_NTPase"/>
</dbReference>
<dbReference type="NCBIfam" id="TIGR02173">
    <property type="entry name" value="cyt_kin_arch"/>
    <property type="match status" value="1"/>
</dbReference>
<dbReference type="Pfam" id="PF13189">
    <property type="entry name" value="Cytidylate_kin2"/>
    <property type="match status" value="1"/>
</dbReference>
<dbReference type="SUPFAM" id="SSF52540">
    <property type="entry name" value="P-loop containing nucleoside triphosphate hydrolases"/>
    <property type="match status" value="1"/>
</dbReference>
<comment type="catalytic activity">
    <reaction>
        <text>CMP + ATP = CDP + ADP</text>
        <dbReference type="Rhea" id="RHEA:11600"/>
        <dbReference type="ChEBI" id="CHEBI:30616"/>
        <dbReference type="ChEBI" id="CHEBI:58069"/>
        <dbReference type="ChEBI" id="CHEBI:60377"/>
        <dbReference type="ChEBI" id="CHEBI:456216"/>
        <dbReference type="EC" id="2.7.4.25"/>
    </reaction>
</comment>
<comment type="catalytic activity">
    <reaction>
        <text>dCMP + ATP = dCDP + ADP</text>
        <dbReference type="Rhea" id="RHEA:25094"/>
        <dbReference type="ChEBI" id="CHEBI:30616"/>
        <dbReference type="ChEBI" id="CHEBI:57566"/>
        <dbReference type="ChEBI" id="CHEBI:58593"/>
        <dbReference type="ChEBI" id="CHEBI:456216"/>
        <dbReference type="EC" id="2.7.4.25"/>
    </reaction>
</comment>
<comment type="subcellular location">
    <subcellularLocation>
        <location evidence="1">Cytoplasm</location>
    </subcellularLocation>
</comment>
<comment type="similarity">
    <text evidence="2">Belongs to the cytidylate kinase family. Type 2 subfamily.</text>
</comment>
<accession>Q9UZJ6</accession>
<accession>G8ZKC4</accession>
<gene>
    <name type="primary">cmk</name>
    <name type="ordered locus">PYRAB11500</name>
    <name type="ORF">PAB0763</name>
</gene>
<evidence type="ECO:0000250" key="1"/>
<evidence type="ECO:0000305" key="2"/>
<proteinExistence type="inferred from homology"/>
<feature type="chain" id="PRO_0000132018" description="Cytidylate kinase">
    <location>
        <begin position="1"/>
        <end position="181"/>
    </location>
</feature>
<feature type="binding site" evidence="1">
    <location>
        <begin position="12"/>
        <end position="20"/>
    </location>
    <ligand>
        <name>ATP</name>
        <dbReference type="ChEBI" id="CHEBI:30616"/>
    </ligand>
</feature>
<reference key="1">
    <citation type="journal article" date="2003" name="Mol. Microbiol.">
        <title>An integrated analysis of the genome of the hyperthermophilic archaeon Pyrococcus abyssi.</title>
        <authorList>
            <person name="Cohen G.N."/>
            <person name="Barbe V."/>
            <person name="Flament D."/>
            <person name="Galperin M."/>
            <person name="Heilig R."/>
            <person name="Lecompte O."/>
            <person name="Poch O."/>
            <person name="Prieur D."/>
            <person name="Querellou J."/>
            <person name="Ripp R."/>
            <person name="Thierry J.-C."/>
            <person name="Van der Oost J."/>
            <person name="Weissenbach J."/>
            <person name="Zivanovic Y."/>
            <person name="Forterre P."/>
        </authorList>
    </citation>
    <scope>NUCLEOTIDE SEQUENCE [LARGE SCALE GENOMIC DNA]</scope>
    <source>
        <strain>GE5 / Orsay</strain>
    </source>
</reference>
<reference key="2">
    <citation type="journal article" date="2012" name="Curr. Microbiol.">
        <title>Re-annotation of two hyperthermophilic archaea Pyrococcus abyssi GE5 and Pyrococcus furiosus DSM 3638.</title>
        <authorList>
            <person name="Gao J."/>
            <person name="Wang J."/>
        </authorList>
    </citation>
    <scope>GENOME REANNOTATION</scope>
    <source>
        <strain>GE5 / Orsay</strain>
    </source>
</reference>
<name>KCY_PYRAB</name>
<protein>
    <recommendedName>
        <fullName>Cytidylate kinase</fullName>
        <shortName>CK</shortName>
        <ecNumber>2.7.4.25</ecNumber>
    </recommendedName>
    <alternativeName>
        <fullName>Cytidine monophosphate kinase</fullName>
        <shortName>CMP kinase</shortName>
    </alternativeName>
</protein>